<organism>
    <name type="scientific">Streptococcus suis (strain 05ZYH33)</name>
    <dbReference type="NCBI Taxonomy" id="391295"/>
    <lineage>
        <taxon>Bacteria</taxon>
        <taxon>Bacillati</taxon>
        <taxon>Bacillota</taxon>
        <taxon>Bacilli</taxon>
        <taxon>Lactobacillales</taxon>
        <taxon>Streptococcaceae</taxon>
        <taxon>Streptococcus</taxon>
    </lineage>
</organism>
<name>RL4_STRSY</name>
<accession>A4VSF5</accession>
<keyword id="KW-0687">Ribonucleoprotein</keyword>
<keyword id="KW-0689">Ribosomal protein</keyword>
<keyword id="KW-0694">RNA-binding</keyword>
<keyword id="KW-0699">rRNA-binding</keyword>
<proteinExistence type="inferred from homology"/>
<reference key="1">
    <citation type="journal article" date="2007" name="PLoS ONE">
        <title>A glimpse of streptococcal toxic shock syndrome from comparative genomics of S. suis 2 Chinese isolates.</title>
        <authorList>
            <person name="Chen C."/>
            <person name="Tang J."/>
            <person name="Dong W."/>
            <person name="Wang C."/>
            <person name="Feng Y."/>
            <person name="Wang J."/>
            <person name="Zheng F."/>
            <person name="Pan X."/>
            <person name="Liu D."/>
            <person name="Li M."/>
            <person name="Song Y."/>
            <person name="Zhu X."/>
            <person name="Sun H."/>
            <person name="Feng T."/>
            <person name="Guo Z."/>
            <person name="Ju A."/>
            <person name="Ge J."/>
            <person name="Dong Y."/>
            <person name="Sun W."/>
            <person name="Jiang Y."/>
            <person name="Wang J."/>
            <person name="Yan J."/>
            <person name="Yang H."/>
            <person name="Wang X."/>
            <person name="Gao G.F."/>
            <person name="Yang R."/>
            <person name="Wang J."/>
            <person name="Yu J."/>
        </authorList>
    </citation>
    <scope>NUCLEOTIDE SEQUENCE [LARGE SCALE GENOMIC DNA]</scope>
    <source>
        <strain>05ZYH33</strain>
    </source>
</reference>
<gene>
    <name evidence="1" type="primary">rplD</name>
    <name type="ordered locus">SSU05_0072</name>
</gene>
<dbReference type="EMBL" id="CP000407">
    <property type="protein sequence ID" value="ABP89044.1"/>
    <property type="molecule type" value="Genomic_DNA"/>
</dbReference>
<dbReference type="SMR" id="A4VSF5"/>
<dbReference type="STRING" id="391295.SSU05_0072"/>
<dbReference type="KEGG" id="ssu:SSU05_0072"/>
<dbReference type="eggNOG" id="COG0088">
    <property type="taxonomic scope" value="Bacteria"/>
</dbReference>
<dbReference type="HOGENOM" id="CLU_041575_5_2_9"/>
<dbReference type="GO" id="GO:1990904">
    <property type="term" value="C:ribonucleoprotein complex"/>
    <property type="evidence" value="ECO:0007669"/>
    <property type="project" value="UniProtKB-KW"/>
</dbReference>
<dbReference type="GO" id="GO:0005840">
    <property type="term" value="C:ribosome"/>
    <property type="evidence" value="ECO:0007669"/>
    <property type="project" value="UniProtKB-KW"/>
</dbReference>
<dbReference type="GO" id="GO:0019843">
    <property type="term" value="F:rRNA binding"/>
    <property type="evidence" value="ECO:0007669"/>
    <property type="project" value="UniProtKB-UniRule"/>
</dbReference>
<dbReference type="GO" id="GO:0003735">
    <property type="term" value="F:structural constituent of ribosome"/>
    <property type="evidence" value="ECO:0007669"/>
    <property type="project" value="InterPro"/>
</dbReference>
<dbReference type="GO" id="GO:0006412">
    <property type="term" value="P:translation"/>
    <property type="evidence" value="ECO:0007669"/>
    <property type="project" value="UniProtKB-UniRule"/>
</dbReference>
<dbReference type="FunFam" id="3.40.1370.10:FF:000003">
    <property type="entry name" value="50S ribosomal protein L4"/>
    <property type="match status" value="1"/>
</dbReference>
<dbReference type="Gene3D" id="3.40.1370.10">
    <property type="match status" value="1"/>
</dbReference>
<dbReference type="HAMAP" id="MF_01328_B">
    <property type="entry name" value="Ribosomal_uL4_B"/>
    <property type="match status" value="1"/>
</dbReference>
<dbReference type="InterPro" id="IPR002136">
    <property type="entry name" value="Ribosomal_uL4"/>
</dbReference>
<dbReference type="InterPro" id="IPR013005">
    <property type="entry name" value="Ribosomal_uL4-like"/>
</dbReference>
<dbReference type="InterPro" id="IPR023574">
    <property type="entry name" value="Ribosomal_uL4_dom_sf"/>
</dbReference>
<dbReference type="NCBIfam" id="TIGR03953">
    <property type="entry name" value="rplD_bact"/>
    <property type="match status" value="1"/>
</dbReference>
<dbReference type="PANTHER" id="PTHR10746">
    <property type="entry name" value="50S RIBOSOMAL PROTEIN L4"/>
    <property type="match status" value="1"/>
</dbReference>
<dbReference type="PANTHER" id="PTHR10746:SF6">
    <property type="entry name" value="LARGE RIBOSOMAL SUBUNIT PROTEIN UL4M"/>
    <property type="match status" value="1"/>
</dbReference>
<dbReference type="Pfam" id="PF00573">
    <property type="entry name" value="Ribosomal_L4"/>
    <property type="match status" value="1"/>
</dbReference>
<dbReference type="SUPFAM" id="SSF52166">
    <property type="entry name" value="Ribosomal protein L4"/>
    <property type="match status" value="1"/>
</dbReference>
<feature type="chain" id="PRO_1000052515" description="Large ribosomal subunit protein uL4">
    <location>
        <begin position="1"/>
        <end position="207"/>
    </location>
</feature>
<feature type="region of interest" description="Disordered" evidence="2">
    <location>
        <begin position="49"/>
        <end position="78"/>
    </location>
</feature>
<evidence type="ECO:0000255" key="1">
    <source>
        <dbReference type="HAMAP-Rule" id="MF_01328"/>
    </source>
</evidence>
<evidence type="ECO:0000256" key="2">
    <source>
        <dbReference type="SAM" id="MobiDB-lite"/>
    </source>
</evidence>
<evidence type="ECO:0000305" key="3"/>
<protein>
    <recommendedName>
        <fullName evidence="1">Large ribosomal subunit protein uL4</fullName>
    </recommendedName>
    <alternativeName>
        <fullName evidence="3">50S ribosomal protein L4</fullName>
    </alternativeName>
</protein>
<comment type="function">
    <text evidence="1">One of the primary rRNA binding proteins, this protein initially binds near the 5'-end of the 23S rRNA. It is important during the early stages of 50S assembly. It makes multiple contacts with different domains of the 23S rRNA in the assembled 50S subunit and ribosome.</text>
</comment>
<comment type="function">
    <text evidence="1">Forms part of the polypeptide exit tunnel.</text>
</comment>
<comment type="subunit">
    <text evidence="1">Part of the 50S ribosomal subunit.</text>
</comment>
<comment type="similarity">
    <text evidence="1">Belongs to the universal ribosomal protein uL4 family.</text>
</comment>
<sequence>MANVTLFDQTGKQAGEVVLNDAIFGIEPNQAVVFDVIISQRASLRQGTHAVKNRSAVSGGGRKPWRQKGTGRARQGSIRSPQWRGGGVVFGPTPRSYAYKLPQKVRRLALKSVYSEKVAENKFVAVNSLEFTAPKTAEFAKVLAALSIDSKVLVILEEGNEFAALSARNIPGVKVATATTASVLDIANADKLLVTQAAISKIEEVLA</sequence>